<sequence>MTTPGKENFRLKSYKNKSLNPDEMRRRREEEGLQLRKQKREEQLFKRRNVATAEEETEEEVMSDGGFHEAQINNMEMAPGGVITSDMIEMIFSKSPEQQLSATQKFRKLLSKEPNPPIDEVISTPGVVARFVEFLKRKENCTLQFESAWVLTNIASGNSLQTRIVIQAGAVPIFIELLSSEFEDVQEQAVWALGNIAGDSTMCRDYVLDCNILPPLLQLFSKQNRLTMTRNAVWALSNLCRGKSPPPEFAKVSPCLNVLSWLLFVSDTDVLADACWALSYLSDGPNDKIQAVIDAGVCRRLVELLMHNDYKVVSPALRAVGNIVTGDDIQTQVILNCSALQSLLHLLSSPKESIKKEACWTISNITAGNRAQIQTVIDANIFPALISILQTAEFRTRKEAAWAITNATSGGSAEQIKYLVELGCIKPLCDLLTVMDSKIVQVALNGLENILRLGEQEAKRNGTGINPYCALIEEAYGLDKIEFLQSHENQEIYQKAFDLIEHYFGTEDEDSSIAPQVDLNQQQYIFQQCEAPMEGFQL</sequence>
<evidence type="ECO:0000250" key="1">
    <source>
        <dbReference type="UniProtKB" id="P52293"/>
    </source>
</evidence>
<evidence type="ECO:0000250" key="2">
    <source>
        <dbReference type="UniProtKB" id="P52294"/>
    </source>
</evidence>
<evidence type="ECO:0000250" key="3">
    <source>
        <dbReference type="UniProtKB" id="P83953"/>
    </source>
</evidence>
<evidence type="ECO:0000250" key="4">
    <source>
        <dbReference type="UniProtKB" id="Q60960"/>
    </source>
</evidence>
<evidence type="ECO:0000255" key="5">
    <source>
        <dbReference type="PROSITE-ProRule" id="PRU00561"/>
    </source>
</evidence>
<evidence type="ECO:0000256" key="6">
    <source>
        <dbReference type="SAM" id="MobiDB-lite"/>
    </source>
</evidence>
<evidence type="ECO:0000305" key="7"/>
<gene>
    <name type="primary">KPNA1</name>
</gene>
<reference key="1">
    <citation type="submission" date="2004-11" db="EMBL/GenBank/DDBJ databases">
        <authorList>
            <consortium name="The German cDNA consortium"/>
        </authorList>
    </citation>
    <scope>NUCLEOTIDE SEQUENCE [LARGE SCALE MRNA]</scope>
    <source>
        <tissue>Brain cortex</tissue>
    </source>
</reference>
<organism>
    <name type="scientific">Pongo abelii</name>
    <name type="common">Sumatran orangutan</name>
    <name type="synonym">Pongo pygmaeus abelii</name>
    <dbReference type="NCBI Taxonomy" id="9601"/>
    <lineage>
        <taxon>Eukaryota</taxon>
        <taxon>Metazoa</taxon>
        <taxon>Chordata</taxon>
        <taxon>Craniata</taxon>
        <taxon>Vertebrata</taxon>
        <taxon>Euteleostomi</taxon>
        <taxon>Mammalia</taxon>
        <taxon>Eutheria</taxon>
        <taxon>Euarchontoglires</taxon>
        <taxon>Primates</taxon>
        <taxon>Haplorrhini</taxon>
        <taxon>Catarrhini</taxon>
        <taxon>Hominidae</taxon>
        <taxon>Pongo</taxon>
    </lineage>
</organism>
<comment type="function">
    <text evidence="2">Functions in nuclear protein import as an adapter protein for nuclear receptor KPNB1. Binds specifically and directly to substrates containing either a simple or bipartite NLS motif. Docking of the importin/substrate complex to the nuclear pore complex (NPC) is mediated by KPNB1 through binding to nucleoporin FxFG repeats and the complex is subsequently translocated through the pore by an energy requiring, Ran-dependent mechanism. At the nucleoplasmic side of the NPC, Ran binds to importin-beta and the three components separate and importin-alpha and -beta are re-exported from the nucleus to the cytoplasm where GTP hydrolysis releases Ran from importin. The directionality of nuclear import is thought to be conferred by an asymmetric distribution of the GTP- and GDP-bound forms of Ran between the cytoplasm and nucleus. Mediator of PR-DUB complex component BAP1 nuclear import; acts redundantly with KPNA2 and Transportin-1/TNPO1 (By similarity).</text>
</comment>
<comment type="subunit">
    <text evidence="2 3 4">Heterodimer; with KPNB1 (By similarity). Interacts with ANP32E (By similarity). Interacts with ZIC3 (By similarity). Interacts with NSMF; the interaction occurs in a calcium-independent manner after synaptic NMDA receptor stimulation and is required for nuclear import of NSMF but is competed by CABP1 (By similarity). Interacts with APEX1. Interacts with RAG1. Interacts with CTNNBL1 (via its N-terminal). Interacts with AICDA (via its NLS). Interacts with SNAI1 (via zinc fingers). Interacts with DCAF8. Interacts with ITSN1 isoform 2 (By similarity). Interacts with TALDO1 isoform 1 (By similarity). Interacts with the AMPK-mediated 'Ser-659' phosphorylated form of ACSS2; this interaction results in nuclear translocation of ACSS2 (By similarity). Interacts with BAP1 (via C-terminus); the interaction contributes to BAP1 nuclear localization (By similarity).</text>
</comment>
<comment type="subcellular location">
    <subcellularLocation>
        <location evidence="2">Cytoplasm</location>
    </subcellularLocation>
    <subcellularLocation>
        <location evidence="2">Nucleus</location>
    </subcellularLocation>
</comment>
<comment type="domain">
    <text evidence="2">Consists of an N-terminal hydrophilic region, a hydrophobic central region composed of 10 repeats, and a short hydrophilic C-terminus. The N-terminal hydrophilic region contains the importin beta binding domain (IBB domain), which is sufficient for binding importin beta and essential for nuclear protein import.</text>
</comment>
<comment type="domain">
    <text evidence="1">The IBB domain is thought to act as an intrasteric autoregulatory sequence by interacting with the internal autoinhibitory NLS. Binding of KPNB1 probably overlaps the internal NLS and contributes to a high affinity for cytoplasmic NLS-containing cargo substrates. After dissociation of the importin/substrate complex in the nucleus the internal autohibitory NLS contributes to a low affinity for nuclear NLS-containing proteins (By similarity).</text>
</comment>
<comment type="domain">
    <text evidence="1">The major and minor NLS binding sites are mainly involved in recognition of simple or bipartite NLS motifs. Structurally located within in a helical surface groove they contain several conserved Trp and Asn residues of the corresponding third helices (H3) of ARM repeats which mainly contribute to binding (By similarity).</text>
</comment>
<comment type="PTM">
    <text evidence="2">Polyubiquitinated in the presence of RAG1 (in vitro).</text>
</comment>
<comment type="similarity">
    <text evidence="7">Belongs to the importin alpha family.</text>
</comment>
<accession>Q5R909</accession>
<proteinExistence type="evidence at transcript level"/>
<protein>
    <recommendedName>
        <fullName>Importin subunit alpha-5</fullName>
    </recommendedName>
    <alternativeName>
        <fullName>Karyopherin subunit alpha-1</fullName>
    </alternativeName>
    <component>
        <recommendedName>
            <fullName>Importin subunit alpha-5, N-terminally processed</fullName>
        </recommendedName>
    </component>
</protein>
<feature type="chain" id="PRO_0000424493" description="Importin subunit alpha-5">
    <location>
        <begin position="1"/>
        <end position="538"/>
    </location>
</feature>
<feature type="initiator methionine" description="Removed; alternate" evidence="2">
    <location>
        <position position="1"/>
    </location>
</feature>
<feature type="chain" id="PRO_0000297528" description="Importin subunit alpha-5, N-terminally processed">
    <location>
        <begin position="2"/>
        <end position="538"/>
    </location>
</feature>
<feature type="domain" description="IBB" evidence="5">
    <location>
        <begin position="1"/>
        <end position="57"/>
    </location>
</feature>
<feature type="repeat" description="ARM 1; truncated">
    <location>
        <begin position="77"/>
        <end position="117"/>
    </location>
</feature>
<feature type="repeat" description="ARM 2">
    <location>
        <begin position="118"/>
        <end position="161"/>
    </location>
</feature>
<feature type="repeat" description="ARM 3">
    <location>
        <begin position="162"/>
        <end position="206"/>
    </location>
</feature>
<feature type="repeat" description="ARM 4">
    <location>
        <begin position="207"/>
        <end position="245"/>
    </location>
</feature>
<feature type="repeat" description="ARM 5">
    <location>
        <begin position="246"/>
        <end position="290"/>
    </location>
</feature>
<feature type="repeat" description="ARM 6">
    <location>
        <begin position="291"/>
        <end position="330"/>
    </location>
</feature>
<feature type="repeat" description="ARM 7">
    <location>
        <begin position="331"/>
        <end position="372"/>
    </location>
</feature>
<feature type="repeat" description="ARM 8">
    <location>
        <begin position="373"/>
        <end position="412"/>
    </location>
</feature>
<feature type="repeat" description="ARM 9">
    <location>
        <begin position="413"/>
        <end position="457"/>
    </location>
</feature>
<feature type="repeat" description="ARM 10; atypical">
    <location>
        <begin position="460"/>
        <end position="504"/>
    </location>
</feature>
<feature type="region of interest" description="Disordered" evidence="6">
    <location>
        <begin position="1"/>
        <end position="36"/>
    </location>
</feature>
<feature type="region of interest" description="NLS binding site (major)" evidence="1">
    <location>
        <begin position="149"/>
        <end position="241"/>
    </location>
</feature>
<feature type="region of interest" description="Binding to RAG1" evidence="2">
    <location>
        <begin position="245"/>
        <end position="437"/>
    </location>
</feature>
<feature type="region of interest" description="NLS binding site (minor)" evidence="1">
    <location>
        <begin position="318"/>
        <end position="406"/>
    </location>
</feature>
<feature type="short sequence motif" description="Nuclear localization signal" evidence="1">
    <location>
        <begin position="42"/>
        <end position="51"/>
    </location>
</feature>
<feature type="compositionally biased region" description="Basic and acidic residues" evidence="6">
    <location>
        <begin position="20"/>
        <end position="36"/>
    </location>
</feature>
<feature type="modified residue" description="N-acetylmethionine" evidence="2">
    <location>
        <position position="1"/>
    </location>
</feature>
<feature type="modified residue" description="N-acetylthreonine; in Importin subunit alpha-5, N-terminally processed" evidence="2">
    <location>
        <position position="2"/>
    </location>
</feature>
<feature type="modified residue" description="Phosphothreonine" evidence="2">
    <location>
        <position position="3"/>
    </location>
</feature>
<feature type="modified residue" description="Phosphoserine" evidence="2">
    <location>
        <position position="63"/>
    </location>
</feature>
<name>IMA5_PONAB</name>
<dbReference type="EMBL" id="CR859588">
    <property type="protein sequence ID" value="CAH91751.1"/>
    <property type="molecule type" value="mRNA"/>
</dbReference>
<dbReference type="RefSeq" id="NP_001126018.1">
    <property type="nucleotide sequence ID" value="NM_001132546.1"/>
</dbReference>
<dbReference type="RefSeq" id="XP_009236741.1">
    <property type="nucleotide sequence ID" value="XM_009238466.4"/>
</dbReference>
<dbReference type="SMR" id="Q5R909"/>
<dbReference type="FunCoup" id="Q5R909">
    <property type="interactions" value="2664"/>
</dbReference>
<dbReference type="STRING" id="9601.ENSPPYP00000015082"/>
<dbReference type="Ensembl" id="ENSPPYT00000015684.2">
    <property type="protein sequence ID" value="ENSPPYP00000015082.1"/>
    <property type="gene ID" value="ENSPPYG00000013483.2"/>
</dbReference>
<dbReference type="GeneID" id="100172964"/>
<dbReference type="KEGG" id="pon:100172964"/>
<dbReference type="CTD" id="3836"/>
<dbReference type="eggNOG" id="KOG0166">
    <property type="taxonomic scope" value="Eukaryota"/>
</dbReference>
<dbReference type="GeneTree" id="ENSGT01050000244950"/>
<dbReference type="HOGENOM" id="CLU_018084_6_0_1"/>
<dbReference type="InParanoid" id="Q5R909"/>
<dbReference type="OMA" id="MVRNATW"/>
<dbReference type="OrthoDB" id="29145at2759"/>
<dbReference type="TreeFam" id="TF354205"/>
<dbReference type="Proteomes" id="UP000001595">
    <property type="component" value="Chromosome 3"/>
</dbReference>
<dbReference type="GO" id="GO:0005829">
    <property type="term" value="C:cytosol"/>
    <property type="evidence" value="ECO:0007669"/>
    <property type="project" value="Ensembl"/>
</dbReference>
<dbReference type="GO" id="GO:0030425">
    <property type="term" value="C:dendrite"/>
    <property type="evidence" value="ECO:0000250"/>
    <property type="project" value="UniProtKB"/>
</dbReference>
<dbReference type="GO" id="GO:0098978">
    <property type="term" value="C:glutamatergic synapse"/>
    <property type="evidence" value="ECO:0007669"/>
    <property type="project" value="Ensembl"/>
</dbReference>
<dbReference type="GO" id="GO:0042564">
    <property type="term" value="C:NLS-dependent protein nuclear import complex"/>
    <property type="evidence" value="ECO:0007669"/>
    <property type="project" value="Ensembl"/>
</dbReference>
<dbReference type="GO" id="GO:0005654">
    <property type="term" value="C:nucleoplasm"/>
    <property type="evidence" value="ECO:0007669"/>
    <property type="project" value="Ensembl"/>
</dbReference>
<dbReference type="GO" id="GO:0005634">
    <property type="term" value="C:nucleus"/>
    <property type="evidence" value="ECO:0000250"/>
    <property type="project" value="UniProtKB"/>
</dbReference>
<dbReference type="GO" id="GO:0014069">
    <property type="term" value="C:postsynaptic density"/>
    <property type="evidence" value="ECO:0007669"/>
    <property type="project" value="Ensembl"/>
</dbReference>
<dbReference type="GO" id="GO:0061608">
    <property type="term" value="F:nuclear import signal receptor activity"/>
    <property type="evidence" value="ECO:0007669"/>
    <property type="project" value="Ensembl"/>
</dbReference>
<dbReference type="GO" id="GO:0006607">
    <property type="term" value="P:NLS-bearing protein import into nucleus"/>
    <property type="evidence" value="ECO:0007669"/>
    <property type="project" value="Ensembl"/>
</dbReference>
<dbReference type="GO" id="GO:0099527">
    <property type="term" value="P:postsynapse to nucleus signaling pathway"/>
    <property type="evidence" value="ECO:0007669"/>
    <property type="project" value="Ensembl"/>
</dbReference>
<dbReference type="GO" id="GO:0042981">
    <property type="term" value="P:regulation of apoptotic process"/>
    <property type="evidence" value="ECO:0007669"/>
    <property type="project" value="Ensembl"/>
</dbReference>
<dbReference type="GO" id="GO:0060828">
    <property type="term" value="P:regulation of canonical Wnt signaling pathway"/>
    <property type="evidence" value="ECO:0007669"/>
    <property type="project" value="Ensembl"/>
</dbReference>
<dbReference type="GO" id="GO:0014901">
    <property type="term" value="P:satellite cell activation involved in skeletal muscle regeneration"/>
    <property type="evidence" value="ECO:0007669"/>
    <property type="project" value="Ensembl"/>
</dbReference>
<dbReference type="GO" id="GO:0014841">
    <property type="term" value="P:skeletal muscle satellite cell proliferation"/>
    <property type="evidence" value="ECO:0007669"/>
    <property type="project" value="Ensembl"/>
</dbReference>
<dbReference type="FunFam" id="1.20.5.690:FF:000001">
    <property type="entry name" value="Importin subunit alpha"/>
    <property type="match status" value="1"/>
</dbReference>
<dbReference type="FunFam" id="1.25.10.10:FF:000013">
    <property type="entry name" value="Importin subunit alpha"/>
    <property type="match status" value="1"/>
</dbReference>
<dbReference type="Gene3D" id="1.20.5.690">
    <property type="entry name" value="Importin-alpha, importin-beta-binding domain"/>
    <property type="match status" value="1"/>
</dbReference>
<dbReference type="Gene3D" id="1.25.10.10">
    <property type="entry name" value="Leucine-rich Repeat Variant"/>
    <property type="match status" value="1"/>
</dbReference>
<dbReference type="InterPro" id="IPR011989">
    <property type="entry name" value="ARM-like"/>
</dbReference>
<dbReference type="InterPro" id="IPR016024">
    <property type="entry name" value="ARM-type_fold"/>
</dbReference>
<dbReference type="InterPro" id="IPR032413">
    <property type="entry name" value="Arm_3"/>
</dbReference>
<dbReference type="InterPro" id="IPR000225">
    <property type="entry name" value="Armadillo"/>
</dbReference>
<dbReference type="InterPro" id="IPR002652">
    <property type="entry name" value="Importin-a_IBB"/>
</dbReference>
<dbReference type="InterPro" id="IPR036975">
    <property type="entry name" value="Importin-a_IBB_sf"/>
</dbReference>
<dbReference type="InterPro" id="IPR024931">
    <property type="entry name" value="Importin_alpha"/>
</dbReference>
<dbReference type="PANTHER" id="PTHR23316">
    <property type="entry name" value="IMPORTIN ALPHA"/>
    <property type="match status" value="1"/>
</dbReference>
<dbReference type="Pfam" id="PF00514">
    <property type="entry name" value="Arm"/>
    <property type="match status" value="8"/>
</dbReference>
<dbReference type="Pfam" id="PF16186">
    <property type="entry name" value="Arm_3"/>
    <property type="match status" value="1"/>
</dbReference>
<dbReference type="Pfam" id="PF01749">
    <property type="entry name" value="IBB"/>
    <property type="match status" value="1"/>
</dbReference>
<dbReference type="PIRSF" id="PIRSF005673">
    <property type="entry name" value="Importin_alpha"/>
    <property type="match status" value="1"/>
</dbReference>
<dbReference type="SMART" id="SM00185">
    <property type="entry name" value="ARM"/>
    <property type="match status" value="8"/>
</dbReference>
<dbReference type="SUPFAM" id="SSF48371">
    <property type="entry name" value="ARM repeat"/>
    <property type="match status" value="1"/>
</dbReference>
<dbReference type="PROSITE" id="PS50176">
    <property type="entry name" value="ARM_REPEAT"/>
    <property type="match status" value="4"/>
</dbReference>
<dbReference type="PROSITE" id="PS51214">
    <property type="entry name" value="IBB"/>
    <property type="match status" value="1"/>
</dbReference>
<keyword id="KW-0007">Acetylation</keyword>
<keyword id="KW-0963">Cytoplasm</keyword>
<keyword id="KW-0539">Nucleus</keyword>
<keyword id="KW-0597">Phosphoprotein</keyword>
<keyword id="KW-0653">Protein transport</keyword>
<keyword id="KW-1185">Reference proteome</keyword>
<keyword id="KW-0677">Repeat</keyword>
<keyword id="KW-0813">Transport</keyword>
<keyword id="KW-0832">Ubl conjugation</keyword>